<organism>
    <name type="scientific">Desulforamulus reducens (strain ATCC BAA-1160 / DSM 100696 / MI-1)</name>
    <name type="common">Desulfotomaculum reducens</name>
    <dbReference type="NCBI Taxonomy" id="349161"/>
    <lineage>
        <taxon>Bacteria</taxon>
        <taxon>Bacillati</taxon>
        <taxon>Bacillota</taxon>
        <taxon>Clostridia</taxon>
        <taxon>Eubacteriales</taxon>
        <taxon>Peptococcaceae</taxon>
        <taxon>Desulforamulus</taxon>
    </lineage>
</organism>
<feature type="chain" id="PRO_1000073209" description="Small ribosomal subunit protein uS13">
    <location>
        <begin position="1"/>
        <end position="123"/>
    </location>
</feature>
<feature type="region of interest" description="Disordered" evidence="2">
    <location>
        <begin position="96"/>
        <end position="123"/>
    </location>
</feature>
<accession>A4J136</accession>
<sequence length="123" mass="14005">MARIAGVDLPKDKRAEIALTYIYGIGKPTAQKILAQTGVNPDTRIKDLTEEEVNKLRDYIDKNTKVEGDLRREVALNIKRLIEIGCYRGIRHRRGLPVRGQRTKTNARTRKGPKKTVGARRKK</sequence>
<evidence type="ECO:0000255" key="1">
    <source>
        <dbReference type="HAMAP-Rule" id="MF_01315"/>
    </source>
</evidence>
<evidence type="ECO:0000256" key="2">
    <source>
        <dbReference type="SAM" id="MobiDB-lite"/>
    </source>
</evidence>
<evidence type="ECO:0000305" key="3"/>
<keyword id="KW-1185">Reference proteome</keyword>
<keyword id="KW-0687">Ribonucleoprotein</keyword>
<keyword id="KW-0689">Ribosomal protein</keyword>
<keyword id="KW-0694">RNA-binding</keyword>
<keyword id="KW-0699">rRNA-binding</keyword>
<keyword id="KW-0820">tRNA-binding</keyword>
<name>RS13_DESRM</name>
<comment type="function">
    <text evidence="1">Located at the top of the head of the 30S subunit, it contacts several helices of the 16S rRNA. In the 70S ribosome it contacts the 23S rRNA (bridge B1a) and protein L5 of the 50S subunit (bridge B1b), connecting the 2 subunits; these bridges are implicated in subunit movement. Contacts the tRNAs in the A and P-sites.</text>
</comment>
<comment type="subunit">
    <text evidence="1">Part of the 30S ribosomal subunit. Forms a loose heterodimer with protein S19. Forms two bridges to the 50S subunit in the 70S ribosome.</text>
</comment>
<comment type="similarity">
    <text evidence="1">Belongs to the universal ribosomal protein uS13 family.</text>
</comment>
<dbReference type="EMBL" id="CP000612">
    <property type="protein sequence ID" value="ABO48789.1"/>
    <property type="molecule type" value="Genomic_DNA"/>
</dbReference>
<dbReference type="RefSeq" id="WP_011876627.1">
    <property type="nucleotide sequence ID" value="NC_009253.1"/>
</dbReference>
<dbReference type="SMR" id="A4J136"/>
<dbReference type="STRING" id="349161.Dred_0240"/>
<dbReference type="KEGG" id="drm:Dred_0240"/>
<dbReference type="eggNOG" id="COG0099">
    <property type="taxonomic scope" value="Bacteria"/>
</dbReference>
<dbReference type="HOGENOM" id="CLU_103849_1_2_9"/>
<dbReference type="OrthoDB" id="9803610at2"/>
<dbReference type="Proteomes" id="UP000001556">
    <property type="component" value="Chromosome"/>
</dbReference>
<dbReference type="GO" id="GO:0005829">
    <property type="term" value="C:cytosol"/>
    <property type="evidence" value="ECO:0007669"/>
    <property type="project" value="TreeGrafter"/>
</dbReference>
<dbReference type="GO" id="GO:0015935">
    <property type="term" value="C:small ribosomal subunit"/>
    <property type="evidence" value="ECO:0007669"/>
    <property type="project" value="TreeGrafter"/>
</dbReference>
<dbReference type="GO" id="GO:0019843">
    <property type="term" value="F:rRNA binding"/>
    <property type="evidence" value="ECO:0007669"/>
    <property type="project" value="UniProtKB-UniRule"/>
</dbReference>
<dbReference type="GO" id="GO:0003735">
    <property type="term" value="F:structural constituent of ribosome"/>
    <property type="evidence" value="ECO:0007669"/>
    <property type="project" value="InterPro"/>
</dbReference>
<dbReference type="GO" id="GO:0000049">
    <property type="term" value="F:tRNA binding"/>
    <property type="evidence" value="ECO:0007669"/>
    <property type="project" value="UniProtKB-UniRule"/>
</dbReference>
<dbReference type="GO" id="GO:0006412">
    <property type="term" value="P:translation"/>
    <property type="evidence" value="ECO:0007669"/>
    <property type="project" value="UniProtKB-UniRule"/>
</dbReference>
<dbReference type="FunFam" id="1.10.8.50:FF:000001">
    <property type="entry name" value="30S ribosomal protein S13"/>
    <property type="match status" value="1"/>
</dbReference>
<dbReference type="FunFam" id="4.10.910.10:FF:000001">
    <property type="entry name" value="30S ribosomal protein S13"/>
    <property type="match status" value="1"/>
</dbReference>
<dbReference type="Gene3D" id="1.10.8.50">
    <property type="match status" value="1"/>
</dbReference>
<dbReference type="Gene3D" id="4.10.910.10">
    <property type="entry name" value="30s ribosomal protein s13, domain 2"/>
    <property type="match status" value="1"/>
</dbReference>
<dbReference type="HAMAP" id="MF_01315">
    <property type="entry name" value="Ribosomal_uS13"/>
    <property type="match status" value="1"/>
</dbReference>
<dbReference type="InterPro" id="IPR027437">
    <property type="entry name" value="Rbsml_uS13_C"/>
</dbReference>
<dbReference type="InterPro" id="IPR001892">
    <property type="entry name" value="Ribosomal_uS13"/>
</dbReference>
<dbReference type="InterPro" id="IPR010979">
    <property type="entry name" value="Ribosomal_uS13-like_H2TH"/>
</dbReference>
<dbReference type="InterPro" id="IPR019980">
    <property type="entry name" value="Ribosomal_uS13_bac-type"/>
</dbReference>
<dbReference type="InterPro" id="IPR018269">
    <property type="entry name" value="Ribosomal_uS13_CS"/>
</dbReference>
<dbReference type="NCBIfam" id="TIGR03631">
    <property type="entry name" value="uS13_bact"/>
    <property type="match status" value="1"/>
</dbReference>
<dbReference type="PANTHER" id="PTHR10871">
    <property type="entry name" value="30S RIBOSOMAL PROTEIN S13/40S RIBOSOMAL PROTEIN S18"/>
    <property type="match status" value="1"/>
</dbReference>
<dbReference type="PANTHER" id="PTHR10871:SF1">
    <property type="entry name" value="SMALL RIBOSOMAL SUBUNIT PROTEIN US13M"/>
    <property type="match status" value="1"/>
</dbReference>
<dbReference type="Pfam" id="PF00416">
    <property type="entry name" value="Ribosomal_S13"/>
    <property type="match status" value="1"/>
</dbReference>
<dbReference type="PIRSF" id="PIRSF002134">
    <property type="entry name" value="Ribosomal_S13"/>
    <property type="match status" value="1"/>
</dbReference>
<dbReference type="SUPFAM" id="SSF46946">
    <property type="entry name" value="S13-like H2TH domain"/>
    <property type="match status" value="1"/>
</dbReference>
<dbReference type="PROSITE" id="PS00646">
    <property type="entry name" value="RIBOSOMAL_S13_1"/>
    <property type="match status" value="1"/>
</dbReference>
<dbReference type="PROSITE" id="PS50159">
    <property type="entry name" value="RIBOSOMAL_S13_2"/>
    <property type="match status" value="1"/>
</dbReference>
<reference key="1">
    <citation type="submission" date="2007-03" db="EMBL/GenBank/DDBJ databases">
        <title>Complete sequence of Desulfotomaculum reducens MI-1.</title>
        <authorList>
            <consortium name="US DOE Joint Genome Institute"/>
            <person name="Copeland A."/>
            <person name="Lucas S."/>
            <person name="Lapidus A."/>
            <person name="Barry K."/>
            <person name="Detter J.C."/>
            <person name="Glavina del Rio T."/>
            <person name="Hammon N."/>
            <person name="Israni S."/>
            <person name="Dalin E."/>
            <person name="Tice H."/>
            <person name="Pitluck S."/>
            <person name="Sims D."/>
            <person name="Brettin T."/>
            <person name="Bruce D."/>
            <person name="Han C."/>
            <person name="Tapia R."/>
            <person name="Schmutz J."/>
            <person name="Larimer F."/>
            <person name="Land M."/>
            <person name="Hauser L."/>
            <person name="Kyrpides N."/>
            <person name="Kim E."/>
            <person name="Tebo B.M."/>
            <person name="Richardson P."/>
        </authorList>
    </citation>
    <scope>NUCLEOTIDE SEQUENCE [LARGE SCALE GENOMIC DNA]</scope>
    <source>
        <strain>ATCC BAA-1160 / DSM 100696 / MI-1</strain>
    </source>
</reference>
<protein>
    <recommendedName>
        <fullName evidence="1">Small ribosomal subunit protein uS13</fullName>
    </recommendedName>
    <alternativeName>
        <fullName evidence="3">30S ribosomal protein S13</fullName>
    </alternativeName>
</protein>
<gene>
    <name evidence="1" type="primary">rpsM</name>
    <name type="ordered locus">Dred_0240</name>
</gene>
<proteinExistence type="inferred from homology"/>